<feature type="chain" id="PRO_0000165478" description="Chlorophyll a-b binding protein">
    <location>
        <begin position="1"/>
        <end position="9" status="greater than"/>
    </location>
</feature>
<feature type="modified residue" description="N2-acetylarginine" evidence="2">
    <location>
        <position position="1"/>
    </location>
</feature>
<feature type="modified residue" description="Phosphothreonine" evidence="2">
    <location>
        <position position="3"/>
    </location>
</feature>
<feature type="non-terminal residue" evidence="3">
    <location>
        <position position="9"/>
    </location>
</feature>
<name>CB2B_SPIOL</name>
<keyword id="KW-0007">Acetylation</keyword>
<keyword id="KW-0148">Chlorophyll</keyword>
<keyword id="KW-0150">Chloroplast</keyword>
<keyword id="KW-0157">Chromophore</keyword>
<keyword id="KW-0903">Direct protein sequencing</keyword>
<keyword id="KW-0460">Magnesium</keyword>
<keyword id="KW-0472">Membrane</keyword>
<keyword id="KW-0479">Metal-binding</keyword>
<keyword id="KW-0597">Phosphoprotein</keyword>
<keyword id="KW-0602">Photosynthesis</keyword>
<keyword id="KW-0603">Photosystem I</keyword>
<keyword id="KW-0604">Photosystem II</keyword>
<keyword id="KW-0934">Plastid</keyword>
<keyword id="KW-1185">Reference proteome</keyword>
<keyword id="KW-0793">Thylakoid</keyword>
<dbReference type="iPTMnet" id="Q9T2L0"/>
<dbReference type="Proteomes" id="UP001155700">
    <property type="component" value="Unplaced"/>
</dbReference>
<dbReference type="GO" id="GO:0009535">
    <property type="term" value="C:chloroplast thylakoid membrane"/>
    <property type="evidence" value="ECO:0000314"/>
    <property type="project" value="UniProtKB"/>
</dbReference>
<dbReference type="GO" id="GO:0009522">
    <property type="term" value="C:photosystem I"/>
    <property type="evidence" value="ECO:0007669"/>
    <property type="project" value="UniProtKB-KW"/>
</dbReference>
<dbReference type="GO" id="GO:0009523">
    <property type="term" value="C:photosystem II"/>
    <property type="evidence" value="ECO:0007669"/>
    <property type="project" value="UniProtKB-KW"/>
</dbReference>
<dbReference type="GO" id="GO:0016168">
    <property type="term" value="F:chlorophyll binding"/>
    <property type="evidence" value="ECO:0007669"/>
    <property type="project" value="UniProtKB-KW"/>
</dbReference>
<dbReference type="GO" id="GO:0046872">
    <property type="term" value="F:metal ion binding"/>
    <property type="evidence" value="ECO:0007669"/>
    <property type="project" value="UniProtKB-KW"/>
</dbReference>
<dbReference type="GO" id="GO:0015979">
    <property type="term" value="P:photosynthesis"/>
    <property type="evidence" value="ECO:0007669"/>
    <property type="project" value="UniProtKB-KW"/>
</dbReference>
<organism>
    <name type="scientific">Spinacia oleracea</name>
    <name type="common">Spinach</name>
    <dbReference type="NCBI Taxonomy" id="3562"/>
    <lineage>
        <taxon>Eukaryota</taxon>
        <taxon>Viridiplantae</taxon>
        <taxon>Streptophyta</taxon>
        <taxon>Embryophyta</taxon>
        <taxon>Tracheophyta</taxon>
        <taxon>Spermatophyta</taxon>
        <taxon>Magnoliopsida</taxon>
        <taxon>eudicotyledons</taxon>
        <taxon>Gunneridae</taxon>
        <taxon>Pentapetalae</taxon>
        <taxon>Caryophyllales</taxon>
        <taxon>Chenopodiaceae</taxon>
        <taxon>Chenopodioideae</taxon>
        <taxon>Anserineae</taxon>
        <taxon>Spinacia</taxon>
    </lineage>
</organism>
<sequence>RKTAGKPKN</sequence>
<accession>Q9T2L0</accession>
<evidence type="ECO:0000250" key="1"/>
<evidence type="ECO:0000269" key="2">
    <source>
    </source>
</evidence>
<evidence type="ECO:0000303" key="3">
    <source>
    </source>
</evidence>
<evidence type="ECO:0000305" key="4"/>
<reference key="1">
    <citation type="journal article" date="1991" name="J. Biol. Chem.">
        <title>Tandem mass spectrometry identifies sites of three post-translational modifications of spinach light-harvesting chlorophyll protein II. Proteolytic cleavage, acetylation, and phosphorylation.</title>
        <authorList>
            <person name="Michel H."/>
            <person name="Griffin P.R."/>
            <person name="Shabanowitz J."/>
            <person name="Hunt D.F."/>
            <person name="Bennett J."/>
        </authorList>
    </citation>
    <scope>PROTEIN SEQUENCE</scope>
    <scope>SUBCELLULAR LOCATION</scope>
    <scope>ACETYLATION AT ARG-1</scope>
    <scope>PHOSPHORYLATION AT THR-3</scope>
    <source>
        <tissue evidence="2">Leaf</tissue>
    </source>
</reference>
<comment type="function">
    <text>The light-harvesting complex (LHC) functions as a light receptor, it captures and delivers excitation energy to photosystems with which it is closely associated.</text>
</comment>
<comment type="cofactor">
    <text evidence="1">Binds at least 14 chlorophylls (8 Chl-a and 6 Chl-b) and carotenoids such as lutein and neoxanthin.</text>
</comment>
<comment type="subunit">
    <text>The LHC complex consists of chlorophyll a-b binding proteins.</text>
</comment>
<comment type="subcellular location">
    <subcellularLocation>
        <location evidence="2">Plastid</location>
        <location evidence="2">Chloroplast thylakoid membrane</location>
        <topology evidence="2">Multi-pass membrane protein</topology>
    </subcellularLocation>
</comment>
<comment type="domain">
    <text>The N-terminus of the protein extends into the stroma where it is involved with adhesion of granal membranes and post-translational modifications; both are believed to mediate the distribution of excitation energy between photosystems I and II.</text>
</comment>
<comment type="PTM">
    <text evidence="1">Photoregulated by reversible phosphorylation of its threonine residues.</text>
</comment>
<comment type="similarity">
    <text evidence="4">Belongs to the light-harvesting chlorophyll a/b-binding (LHC) protein family.</text>
</comment>
<proteinExistence type="evidence at protein level"/>
<protein>
    <recommendedName>
        <fullName>Chlorophyll a-b binding protein</fullName>
    </recommendedName>
    <alternativeName>
        <fullName>LHCII type I CAB</fullName>
        <shortName>LHCP</shortName>
    </alternativeName>
</protein>